<evidence type="ECO:0000250" key="1"/>
<evidence type="ECO:0000255" key="2">
    <source>
        <dbReference type="HAMAP-Rule" id="MF_00118"/>
    </source>
</evidence>
<comment type="function">
    <text evidence="2">GTP hydrolase that promotes the GTP-dependent binding of aminoacyl-tRNA to the A-site of ribosomes during protein biosynthesis.</text>
</comment>
<comment type="catalytic activity">
    <reaction evidence="2">
        <text>GTP + H2O = GDP + phosphate + H(+)</text>
        <dbReference type="Rhea" id="RHEA:19669"/>
        <dbReference type="ChEBI" id="CHEBI:15377"/>
        <dbReference type="ChEBI" id="CHEBI:15378"/>
        <dbReference type="ChEBI" id="CHEBI:37565"/>
        <dbReference type="ChEBI" id="CHEBI:43474"/>
        <dbReference type="ChEBI" id="CHEBI:58189"/>
        <dbReference type="EC" id="3.6.5.3"/>
    </reaction>
    <physiologicalReaction direction="left-to-right" evidence="2">
        <dbReference type="Rhea" id="RHEA:19670"/>
    </physiologicalReaction>
</comment>
<comment type="subunit">
    <text evidence="2">Monomer.</text>
</comment>
<comment type="subcellular location">
    <subcellularLocation>
        <location evidence="2">Cytoplasm</location>
    </subcellularLocation>
</comment>
<comment type="similarity">
    <text evidence="2">Belongs to the TRAFAC class translation factor GTPase superfamily. Classic translation factor GTPase family. EF-Tu/EF-1A subfamily.</text>
</comment>
<proteinExistence type="inferred from homology"/>
<gene>
    <name evidence="2" type="primary">tuf</name>
    <name type="ordered locus">CFF8240_1325</name>
</gene>
<keyword id="KW-0963">Cytoplasm</keyword>
<keyword id="KW-0251">Elongation factor</keyword>
<keyword id="KW-0342">GTP-binding</keyword>
<keyword id="KW-0378">Hydrolase</keyword>
<keyword id="KW-0460">Magnesium</keyword>
<keyword id="KW-0479">Metal-binding</keyword>
<keyword id="KW-0547">Nucleotide-binding</keyword>
<keyword id="KW-0648">Protein biosynthesis</keyword>
<name>EFTU_CAMFF</name>
<dbReference type="EC" id="3.6.5.3" evidence="2"/>
<dbReference type="EMBL" id="CP000487">
    <property type="protein sequence ID" value="ABK82375.1"/>
    <property type="molecule type" value="Genomic_DNA"/>
</dbReference>
<dbReference type="RefSeq" id="WP_002850129.1">
    <property type="nucleotide sequence ID" value="NC_008599.1"/>
</dbReference>
<dbReference type="SMR" id="A0RQJ3"/>
<dbReference type="GeneID" id="61065143"/>
<dbReference type="KEGG" id="cff:CFF8240_1325"/>
<dbReference type="eggNOG" id="COG0050">
    <property type="taxonomic scope" value="Bacteria"/>
</dbReference>
<dbReference type="HOGENOM" id="CLU_007265_0_0_7"/>
<dbReference type="Proteomes" id="UP000000760">
    <property type="component" value="Chromosome"/>
</dbReference>
<dbReference type="GO" id="GO:0005829">
    <property type="term" value="C:cytosol"/>
    <property type="evidence" value="ECO:0007669"/>
    <property type="project" value="TreeGrafter"/>
</dbReference>
<dbReference type="GO" id="GO:0005525">
    <property type="term" value="F:GTP binding"/>
    <property type="evidence" value="ECO:0007669"/>
    <property type="project" value="UniProtKB-UniRule"/>
</dbReference>
<dbReference type="GO" id="GO:0003924">
    <property type="term" value="F:GTPase activity"/>
    <property type="evidence" value="ECO:0007669"/>
    <property type="project" value="InterPro"/>
</dbReference>
<dbReference type="GO" id="GO:0003746">
    <property type="term" value="F:translation elongation factor activity"/>
    <property type="evidence" value="ECO:0007669"/>
    <property type="project" value="UniProtKB-UniRule"/>
</dbReference>
<dbReference type="CDD" id="cd01884">
    <property type="entry name" value="EF_Tu"/>
    <property type="match status" value="1"/>
</dbReference>
<dbReference type="CDD" id="cd03697">
    <property type="entry name" value="EFTU_II"/>
    <property type="match status" value="1"/>
</dbReference>
<dbReference type="CDD" id="cd03707">
    <property type="entry name" value="EFTU_III"/>
    <property type="match status" value="1"/>
</dbReference>
<dbReference type="FunFam" id="2.40.30.10:FF:000001">
    <property type="entry name" value="Elongation factor Tu"/>
    <property type="match status" value="1"/>
</dbReference>
<dbReference type="FunFam" id="3.40.50.300:FF:000003">
    <property type="entry name" value="Elongation factor Tu"/>
    <property type="match status" value="1"/>
</dbReference>
<dbReference type="Gene3D" id="3.40.50.300">
    <property type="entry name" value="P-loop containing nucleotide triphosphate hydrolases"/>
    <property type="match status" value="1"/>
</dbReference>
<dbReference type="Gene3D" id="2.40.30.10">
    <property type="entry name" value="Translation factors"/>
    <property type="match status" value="2"/>
</dbReference>
<dbReference type="HAMAP" id="MF_00118_B">
    <property type="entry name" value="EF_Tu_B"/>
    <property type="match status" value="1"/>
</dbReference>
<dbReference type="InterPro" id="IPR041709">
    <property type="entry name" value="EF-Tu_GTP-bd"/>
</dbReference>
<dbReference type="InterPro" id="IPR050055">
    <property type="entry name" value="EF-Tu_GTPase"/>
</dbReference>
<dbReference type="InterPro" id="IPR004161">
    <property type="entry name" value="EFTu-like_2"/>
</dbReference>
<dbReference type="InterPro" id="IPR033720">
    <property type="entry name" value="EFTU_2"/>
</dbReference>
<dbReference type="InterPro" id="IPR031157">
    <property type="entry name" value="G_TR_CS"/>
</dbReference>
<dbReference type="InterPro" id="IPR027417">
    <property type="entry name" value="P-loop_NTPase"/>
</dbReference>
<dbReference type="InterPro" id="IPR005225">
    <property type="entry name" value="Small_GTP-bd"/>
</dbReference>
<dbReference type="InterPro" id="IPR000795">
    <property type="entry name" value="T_Tr_GTP-bd_dom"/>
</dbReference>
<dbReference type="InterPro" id="IPR009000">
    <property type="entry name" value="Transl_B-barrel_sf"/>
</dbReference>
<dbReference type="InterPro" id="IPR009001">
    <property type="entry name" value="Transl_elong_EF1A/Init_IF2_C"/>
</dbReference>
<dbReference type="InterPro" id="IPR004541">
    <property type="entry name" value="Transl_elong_EFTu/EF1A_bac/org"/>
</dbReference>
<dbReference type="InterPro" id="IPR004160">
    <property type="entry name" value="Transl_elong_EFTu/EF1A_C"/>
</dbReference>
<dbReference type="NCBIfam" id="TIGR00485">
    <property type="entry name" value="EF-Tu"/>
    <property type="match status" value="1"/>
</dbReference>
<dbReference type="NCBIfam" id="NF000766">
    <property type="entry name" value="PRK00049.1"/>
    <property type="match status" value="1"/>
</dbReference>
<dbReference type="NCBIfam" id="NF009372">
    <property type="entry name" value="PRK12735.1"/>
    <property type="match status" value="1"/>
</dbReference>
<dbReference type="NCBIfam" id="NF009373">
    <property type="entry name" value="PRK12736.1"/>
    <property type="match status" value="1"/>
</dbReference>
<dbReference type="NCBIfam" id="TIGR00231">
    <property type="entry name" value="small_GTP"/>
    <property type="match status" value="1"/>
</dbReference>
<dbReference type="PANTHER" id="PTHR43721:SF22">
    <property type="entry name" value="ELONGATION FACTOR TU, MITOCHONDRIAL"/>
    <property type="match status" value="1"/>
</dbReference>
<dbReference type="PANTHER" id="PTHR43721">
    <property type="entry name" value="ELONGATION FACTOR TU-RELATED"/>
    <property type="match status" value="1"/>
</dbReference>
<dbReference type="Pfam" id="PF00009">
    <property type="entry name" value="GTP_EFTU"/>
    <property type="match status" value="1"/>
</dbReference>
<dbReference type="Pfam" id="PF03144">
    <property type="entry name" value="GTP_EFTU_D2"/>
    <property type="match status" value="1"/>
</dbReference>
<dbReference type="Pfam" id="PF03143">
    <property type="entry name" value="GTP_EFTU_D3"/>
    <property type="match status" value="1"/>
</dbReference>
<dbReference type="PRINTS" id="PR00315">
    <property type="entry name" value="ELONGATNFCT"/>
</dbReference>
<dbReference type="SUPFAM" id="SSF50465">
    <property type="entry name" value="EF-Tu/eEF-1alpha/eIF2-gamma C-terminal domain"/>
    <property type="match status" value="1"/>
</dbReference>
<dbReference type="SUPFAM" id="SSF52540">
    <property type="entry name" value="P-loop containing nucleoside triphosphate hydrolases"/>
    <property type="match status" value="1"/>
</dbReference>
<dbReference type="SUPFAM" id="SSF50447">
    <property type="entry name" value="Translation proteins"/>
    <property type="match status" value="1"/>
</dbReference>
<dbReference type="PROSITE" id="PS00301">
    <property type="entry name" value="G_TR_1"/>
    <property type="match status" value="1"/>
</dbReference>
<dbReference type="PROSITE" id="PS51722">
    <property type="entry name" value="G_TR_2"/>
    <property type="match status" value="1"/>
</dbReference>
<reference key="1">
    <citation type="submission" date="2006-11" db="EMBL/GenBank/DDBJ databases">
        <title>Sequence of Campylobacter fetus subsp. fetus 82-40.</title>
        <authorList>
            <person name="Fouts D.E."/>
            <person name="Nelson K.E."/>
        </authorList>
    </citation>
    <scope>NUCLEOTIDE SEQUENCE [LARGE SCALE GENOMIC DNA]</scope>
    <source>
        <strain>82-40</strain>
    </source>
</reference>
<accession>A0RQJ3</accession>
<protein>
    <recommendedName>
        <fullName evidence="2">Elongation factor Tu</fullName>
        <shortName evidence="2">EF-Tu</shortName>
        <ecNumber evidence="2">3.6.5.3</ecNumber>
    </recommendedName>
</protein>
<organism>
    <name type="scientific">Campylobacter fetus subsp. fetus (strain 82-40)</name>
    <dbReference type="NCBI Taxonomy" id="360106"/>
    <lineage>
        <taxon>Bacteria</taxon>
        <taxon>Pseudomonadati</taxon>
        <taxon>Campylobacterota</taxon>
        <taxon>Epsilonproteobacteria</taxon>
        <taxon>Campylobacterales</taxon>
        <taxon>Campylobacteraceae</taxon>
        <taxon>Campylobacter</taxon>
    </lineage>
</organism>
<feature type="chain" id="PRO_1000015628" description="Elongation factor Tu">
    <location>
        <begin position="1"/>
        <end position="399"/>
    </location>
</feature>
<feature type="domain" description="tr-type G">
    <location>
        <begin position="10"/>
        <end position="209"/>
    </location>
</feature>
<feature type="region of interest" description="G1" evidence="1">
    <location>
        <begin position="19"/>
        <end position="26"/>
    </location>
</feature>
<feature type="region of interest" description="G2" evidence="1">
    <location>
        <begin position="60"/>
        <end position="64"/>
    </location>
</feature>
<feature type="region of interest" description="G3" evidence="1">
    <location>
        <begin position="81"/>
        <end position="84"/>
    </location>
</feature>
<feature type="region of interest" description="G4" evidence="1">
    <location>
        <begin position="136"/>
        <end position="139"/>
    </location>
</feature>
<feature type="region of interest" description="G5" evidence="1">
    <location>
        <begin position="174"/>
        <end position="176"/>
    </location>
</feature>
<feature type="binding site" evidence="2">
    <location>
        <begin position="19"/>
        <end position="26"/>
    </location>
    <ligand>
        <name>GTP</name>
        <dbReference type="ChEBI" id="CHEBI:37565"/>
    </ligand>
</feature>
<feature type="binding site" evidence="2">
    <location>
        <position position="26"/>
    </location>
    <ligand>
        <name>Mg(2+)</name>
        <dbReference type="ChEBI" id="CHEBI:18420"/>
    </ligand>
</feature>
<feature type="binding site" evidence="2">
    <location>
        <begin position="81"/>
        <end position="85"/>
    </location>
    <ligand>
        <name>GTP</name>
        <dbReference type="ChEBI" id="CHEBI:37565"/>
    </ligand>
</feature>
<feature type="binding site" evidence="2">
    <location>
        <begin position="136"/>
        <end position="139"/>
    </location>
    <ligand>
        <name>GTP</name>
        <dbReference type="ChEBI" id="CHEBI:37565"/>
    </ligand>
</feature>
<sequence length="399" mass="43681">MAKEKFSRNKPHVNIGTIGHVDHGKTTLTAAISAVLSRRGLAELKDYDNIDNAPEEKERGITIATSHIEYETENRHYAHVDCPGHADYVKNMITGAAQMDGAILVVSAADGPMPQTREHILLSRQVGVPYIVVFMNKADMVDDAELLELVEMEIRELLSEYDFPGDDTPIISGSALQALEEAKAGNDGEWSAKIMDLMAAVDSYIPTPVRATDKDFLMPIEDVFSISGRGTVVTGRIEKGIVKVGDTIEIVGIRDTQTTTVTGVEMFRKEMDQGEAGDNVGVLLRGTKKEDVERGMVLCKPKSITPHTKFEGEVYILTKEEGGRHTPFFNNYRPQFYVRTTDVTGSITLPEGTEMVMPGDNLKITVELINPVALEDGTRFAIREGGRTVGSGVVSKIIA</sequence>